<keyword id="KW-0067">ATP-binding</keyword>
<keyword id="KW-0175">Coiled coil</keyword>
<keyword id="KW-0493">Microtubule</keyword>
<keyword id="KW-0505">Motor protein</keyword>
<keyword id="KW-0547">Nucleotide-binding</keyword>
<keyword id="KW-1185">Reference proteome</keyword>
<feature type="chain" id="PRO_0000438053" description="Kinesin-like protein KIN-14T">
    <location>
        <begin position="1"/>
        <end position="859"/>
    </location>
</feature>
<feature type="domain" description="Kinesin motor" evidence="2">
    <location>
        <begin position="91"/>
        <end position="411"/>
    </location>
</feature>
<feature type="region of interest" description="Disordered" evidence="3">
    <location>
        <begin position="511"/>
        <end position="530"/>
    </location>
</feature>
<feature type="coiled-coil region" evidence="1">
    <location>
        <begin position="422"/>
        <end position="463"/>
    </location>
</feature>
<feature type="compositionally biased region" description="Polar residues" evidence="3">
    <location>
        <begin position="518"/>
        <end position="530"/>
    </location>
</feature>
<feature type="binding site" evidence="2">
    <location>
        <begin position="168"/>
        <end position="175"/>
    </location>
    <ligand>
        <name>ATP</name>
        <dbReference type="ChEBI" id="CHEBI:30616"/>
    </ligand>
</feature>
<evidence type="ECO:0000255" key="1"/>
<evidence type="ECO:0000255" key="2">
    <source>
        <dbReference type="PROSITE-ProRule" id="PRU00283"/>
    </source>
</evidence>
<evidence type="ECO:0000256" key="3">
    <source>
        <dbReference type="SAM" id="MobiDB-lite"/>
    </source>
</evidence>
<evidence type="ECO:0000303" key="4">
    <source>
    </source>
</evidence>
<evidence type="ECO:0000305" key="5"/>
<evidence type="ECO:0000312" key="6">
    <source>
        <dbReference type="Araport" id="AT1G55550"/>
    </source>
</evidence>
<evidence type="ECO:0000312" key="7">
    <source>
        <dbReference type="EMBL" id="AAD10640.1"/>
    </source>
</evidence>
<organism>
    <name type="scientific">Arabidopsis thaliana</name>
    <name type="common">Mouse-ear cress</name>
    <dbReference type="NCBI Taxonomy" id="3702"/>
    <lineage>
        <taxon>Eukaryota</taxon>
        <taxon>Viridiplantae</taxon>
        <taxon>Streptophyta</taxon>
        <taxon>Embryophyta</taxon>
        <taxon>Tracheophyta</taxon>
        <taxon>Spermatophyta</taxon>
        <taxon>Magnoliopsida</taxon>
        <taxon>eudicotyledons</taxon>
        <taxon>Gunneridae</taxon>
        <taxon>Pentapetalae</taxon>
        <taxon>rosids</taxon>
        <taxon>malvids</taxon>
        <taxon>Brassicales</taxon>
        <taxon>Brassicaceae</taxon>
        <taxon>Camelineae</taxon>
        <taxon>Arabidopsis</taxon>
    </lineage>
</organism>
<accession>F4I1T9</accession>
<accession>Q9ZVV2</accession>
<proteinExistence type="inferred from homology"/>
<comment type="similarity">
    <text evidence="4">Belongs to the TRAFAC class myosin-kinesin ATPase superfamily. Kinesin family. KIN-14 subfamily.</text>
</comment>
<comment type="sequence caution" evidence="5">
    <conflict type="erroneous gene model prediction">
        <sequence resource="EMBL-CDS" id="AAD10640"/>
    </conflict>
</comment>
<dbReference type="EMBL" id="AC005223">
    <property type="protein sequence ID" value="AAD10640.1"/>
    <property type="status" value="ALT_SEQ"/>
    <property type="molecule type" value="Genomic_DNA"/>
</dbReference>
<dbReference type="EMBL" id="CP002684">
    <property type="protein sequence ID" value="AEE33265.1"/>
    <property type="molecule type" value="Genomic_DNA"/>
</dbReference>
<dbReference type="PIR" id="B96598">
    <property type="entry name" value="B96598"/>
</dbReference>
<dbReference type="RefSeq" id="NP_564696.2">
    <property type="nucleotide sequence ID" value="NM_104431.3"/>
</dbReference>
<dbReference type="SMR" id="F4I1T9"/>
<dbReference type="FunCoup" id="F4I1T9">
    <property type="interactions" value="216"/>
</dbReference>
<dbReference type="STRING" id="3702.F4I1T9"/>
<dbReference type="iPTMnet" id="F4I1T9"/>
<dbReference type="PaxDb" id="3702-AT1G55550.1"/>
<dbReference type="ProteomicsDB" id="250694"/>
<dbReference type="EnsemblPlants" id="AT1G55550.1">
    <property type="protein sequence ID" value="AT1G55550.1"/>
    <property type="gene ID" value="AT1G55550"/>
</dbReference>
<dbReference type="GeneID" id="842004"/>
<dbReference type="Gramene" id="AT1G55550.1">
    <property type="protein sequence ID" value="AT1G55550.1"/>
    <property type="gene ID" value="AT1G55550"/>
</dbReference>
<dbReference type="KEGG" id="ath:AT1G55550"/>
<dbReference type="Araport" id="AT1G55550"/>
<dbReference type="TAIR" id="AT1G55550"/>
<dbReference type="eggNOG" id="KOG0239">
    <property type="taxonomic scope" value="Eukaryota"/>
</dbReference>
<dbReference type="HOGENOM" id="CLU_013578_1_0_1"/>
<dbReference type="InParanoid" id="F4I1T9"/>
<dbReference type="OMA" id="EYRTEDT"/>
<dbReference type="PRO" id="PR:F4I1T9"/>
<dbReference type="Proteomes" id="UP000006548">
    <property type="component" value="Chromosome 1"/>
</dbReference>
<dbReference type="ExpressionAtlas" id="F4I1T9">
    <property type="expression patterns" value="baseline and differential"/>
</dbReference>
<dbReference type="GO" id="GO:0005874">
    <property type="term" value="C:microtubule"/>
    <property type="evidence" value="ECO:0007669"/>
    <property type="project" value="UniProtKB-KW"/>
</dbReference>
<dbReference type="GO" id="GO:0005739">
    <property type="term" value="C:mitochondrion"/>
    <property type="evidence" value="ECO:0007005"/>
    <property type="project" value="TAIR"/>
</dbReference>
<dbReference type="GO" id="GO:0005524">
    <property type="term" value="F:ATP binding"/>
    <property type="evidence" value="ECO:0007669"/>
    <property type="project" value="UniProtKB-KW"/>
</dbReference>
<dbReference type="GO" id="GO:0008017">
    <property type="term" value="F:microtubule binding"/>
    <property type="evidence" value="ECO:0007669"/>
    <property type="project" value="InterPro"/>
</dbReference>
<dbReference type="GO" id="GO:0003777">
    <property type="term" value="F:microtubule motor activity"/>
    <property type="evidence" value="ECO:0007669"/>
    <property type="project" value="InterPro"/>
</dbReference>
<dbReference type="GO" id="GO:0007018">
    <property type="term" value="P:microtubule-based movement"/>
    <property type="evidence" value="ECO:0007669"/>
    <property type="project" value="InterPro"/>
</dbReference>
<dbReference type="FunFam" id="3.40.850.10:FF:000074">
    <property type="entry name" value="p-loop containing nucleoside triphosphate hydrolase superfamily protein"/>
    <property type="match status" value="1"/>
</dbReference>
<dbReference type="Gene3D" id="3.40.850.10">
    <property type="entry name" value="Kinesin motor domain"/>
    <property type="match status" value="1"/>
</dbReference>
<dbReference type="InterPro" id="IPR027640">
    <property type="entry name" value="Kinesin-like_fam"/>
</dbReference>
<dbReference type="InterPro" id="IPR001752">
    <property type="entry name" value="Kinesin_motor_dom"/>
</dbReference>
<dbReference type="InterPro" id="IPR036961">
    <property type="entry name" value="Kinesin_motor_dom_sf"/>
</dbReference>
<dbReference type="InterPro" id="IPR027417">
    <property type="entry name" value="P-loop_NTPase"/>
</dbReference>
<dbReference type="PANTHER" id="PTHR47972:SF23">
    <property type="entry name" value="KINESIN MOTOR DOMAIN-CONTAINING PROTEIN"/>
    <property type="match status" value="1"/>
</dbReference>
<dbReference type="PANTHER" id="PTHR47972">
    <property type="entry name" value="KINESIN-LIKE PROTEIN KLP-3"/>
    <property type="match status" value="1"/>
</dbReference>
<dbReference type="Pfam" id="PF00225">
    <property type="entry name" value="Kinesin"/>
    <property type="match status" value="1"/>
</dbReference>
<dbReference type="PRINTS" id="PR00380">
    <property type="entry name" value="KINESINHEAVY"/>
</dbReference>
<dbReference type="SMART" id="SM00129">
    <property type="entry name" value="KISc"/>
    <property type="match status" value="1"/>
</dbReference>
<dbReference type="SUPFAM" id="SSF52540">
    <property type="entry name" value="P-loop containing nucleoside triphosphate hydrolases"/>
    <property type="match status" value="1"/>
</dbReference>
<dbReference type="PROSITE" id="PS50067">
    <property type="entry name" value="KINESIN_MOTOR_2"/>
    <property type="match status" value="1"/>
</dbReference>
<name>KN14T_ARATH</name>
<protein>
    <recommendedName>
        <fullName evidence="5">Kinesin-like protein KIN-14T</fullName>
    </recommendedName>
</protein>
<reference key="1">
    <citation type="journal article" date="2000" name="Nature">
        <title>Sequence and analysis of chromosome 1 of the plant Arabidopsis thaliana.</title>
        <authorList>
            <person name="Theologis A."/>
            <person name="Ecker J.R."/>
            <person name="Palm C.J."/>
            <person name="Federspiel N.A."/>
            <person name="Kaul S."/>
            <person name="White O."/>
            <person name="Alonso J."/>
            <person name="Altafi H."/>
            <person name="Araujo R."/>
            <person name="Bowman C.L."/>
            <person name="Brooks S.Y."/>
            <person name="Buehler E."/>
            <person name="Chan A."/>
            <person name="Chao Q."/>
            <person name="Chen H."/>
            <person name="Cheuk R.F."/>
            <person name="Chin C.W."/>
            <person name="Chung M.K."/>
            <person name="Conn L."/>
            <person name="Conway A.B."/>
            <person name="Conway A.R."/>
            <person name="Creasy T.H."/>
            <person name="Dewar K."/>
            <person name="Dunn P."/>
            <person name="Etgu P."/>
            <person name="Feldblyum T.V."/>
            <person name="Feng J.-D."/>
            <person name="Fong B."/>
            <person name="Fujii C.Y."/>
            <person name="Gill J.E."/>
            <person name="Goldsmith A.D."/>
            <person name="Haas B."/>
            <person name="Hansen N.F."/>
            <person name="Hughes B."/>
            <person name="Huizar L."/>
            <person name="Hunter J.L."/>
            <person name="Jenkins J."/>
            <person name="Johnson-Hopson C."/>
            <person name="Khan S."/>
            <person name="Khaykin E."/>
            <person name="Kim C.J."/>
            <person name="Koo H.L."/>
            <person name="Kremenetskaia I."/>
            <person name="Kurtz D.B."/>
            <person name="Kwan A."/>
            <person name="Lam B."/>
            <person name="Langin-Hooper S."/>
            <person name="Lee A."/>
            <person name="Lee J.M."/>
            <person name="Lenz C.A."/>
            <person name="Li J.H."/>
            <person name="Li Y.-P."/>
            <person name="Lin X."/>
            <person name="Liu S.X."/>
            <person name="Liu Z.A."/>
            <person name="Luros J.S."/>
            <person name="Maiti R."/>
            <person name="Marziali A."/>
            <person name="Militscher J."/>
            <person name="Miranda M."/>
            <person name="Nguyen M."/>
            <person name="Nierman W.C."/>
            <person name="Osborne B.I."/>
            <person name="Pai G."/>
            <person name="Peterson J."/>
            <person name="Pham P.K."/>
            <person name="Rizzo M."/>
            <person name="Rooney T."/>
            <person name="Rowley D."/>
            <person name="Sakano H."/>
            <person name="Salzberg S.L."/>
            <person name="Schwartz J.R."/>
            <person name="Shinn P."/>
            <person name="Southwick A.M."/>
            <person name="Sun H."/>
            <person name="Tallon L.J."/>
            <person name="Tambunga G."/>
            <person name="Toriumi M.J."/>
            <person name="Town C.D."/>
            <person name="Utterback T."/>
            <person name="Van Aken S."/>
            <person name="Vaysberg M."/>
            <person name="Vysotskaia V.S."/>
            <person name="Walker M."/>
            <person name="Wu D."/>
            <person name="Yu G."/>
            <person name="Fraser C.M."/>
            <person name="Venter J.C."/>
            <person name="Davis R.W."/>
        </authorList>
    </citation>
    <scope>NUCLEOTIDE SEQUENCE [LARGE SCALE GENOMIC DNA]</scope>
    <source>
        <strain>cv. Columbia</strain>
    </source>
</reference>
<reference key="2">
    <citation type="journal article" date="2017" name="Plant J.">
        <title>Araport11: a complete reannotation of the Arabidopsis thaliana reference genome.</title>
        <authorList>
            <person name="Cheng C.Y."/>
            <person name="Krishnakumar V."/>
            <person name="Chan A.P."/>
            <person name="Thibaud-Nissen F."/>
            <person name="Schobel S."/>
            <person name="Town C.D."/>
        </authorList>
    </citation>
    <scope>GENOME REANNOTATION</scope>
    <source>
        <strain>cv. Columbia</strain>
    </source>
</reference>
<reference key="3">
    <citation type="journal article" date="2001" name="BMC Genomics">
        <title>Kinesins in the Arabidopsis genome: a comparative analysis among eukaryotes.</title>
        <authorList>
            <person name="Reddy A.S."/>
            <person name="Day I.S."/>
        </authorList>
    </citation>
    <scope>GENE FAMILY</scope>
</reference>
<reference key="4">
    <citation type="journal article" date="2006" name="BMC Genomics">
        <title>Comprehensive comparative analysis of kinesins in photosynthetic eukaryotes.</title>
        <authorList>
            <person name="Richardson D.N."/>
            <person name="Simmons M.P."/>
            <person name="Reddy A.S."/>
        </authorList>
    </citation>
    <scope>GENE FAMILY</scope>
    <scope>NOMENCLATURE</scope>
</reference>
<reference key="5">
    <citation type="journal article" date="2012" name="Protoplasma">
        <title>Functions of the Arabidopsis kinesin superfamily of microtubule-based motor proteins.</title>
        <authorList>
            <person name="Zhu C."/>
            <person name="Dixit R."/>
        </authorList>
    </citation>
    <scope>REVIEW</scope>
</reference>
<sequence length="859" mass="96715">MERTRSKPVRNLPETIHSLLGLKSHMTSDWVKSVCNIAKNTSSTSKKEEDDFVSVDLQSIRDQLSALTVQVNDQNKLRRQILNEFLDLKGNIRVFCRVKPLGATEKLRPPVASDTRNVIIKLSETKRKTYNFDRVFQPDSSQDDVFLEIEPVIKSVIDGYNACIFAYGQTGTGKTYTMEGLPNSPGIVPRAIKGLFKQVEESNHMFTIHFSMLEIYMGNLKDLLLSEATKPISPIPPSLSIHTDPNGEIDIENLVKLKVDDFNEILRLYKVGCRSRATASTNSNSVSSRSHCMIRVSVTSLGAPERRRETNKIWLVDLGGSERVLKTRATGRRFDEGKAINLSLSALGDVINSLQRKNSHIPYRNSKLTQVLKDSLGQDSKTLMLVHISPKEDDLCETICSLNFATRAKNIHLGQDESTEEQAKKEAVMMNLQKMMEKIEQEREMSLRKMRNLNETLEKLTGKPHVIEEEEKDVVREVIHVTPKKPRNKSRRASDVFPSFMRPTASSNRRLSGADFSVTPNSSSFKSRRNSMISVRAESACLPVKKKKNRFDSACDSSDRSVSKSTSIMRQNTADDATVYSQDISECDIKLVVSEHKPKPLQMGPGSATKSRSNISNFEKDVMQKIGGTEFSRINSWLRSQSENRSYVLDKTQLPATHFLENLNRSLEKSPTQSFTTEKITGNELEGIEETKTNETVVNPTLMLKKLFELQCLCSAEEEDQILSRFPIPGYEDDDESRYPPILENDGFSQHIDNEWFGVNNYSADWERDSPATIPLLECEPDLKQLLPELGLDRSLKPRGLAVAEGAAPPLLRAQETLGERGKGPTFMQKLQALCFRILLGLGFMDVGFGNDFFNGLTK</sequence>
<gene>
    <name evidence="5" type="primary">KIN14T</name>
    <name evidence="6" type="ordered locus">At1g55550</name>
    <name evidence="7" type="ORF">T5A14.3</name>
</gene>